<gene>
    <name type="ordered locus">Saci_0539</name>
</gene>
<sequence length="367" mass="40600">MHFPLIPMVKLEEIKQIFKPKLLPIIWNKTKLTLLDQSRLPFEKIYVDVTKVEEVSDAIRTMKVRGAPAIGITAGYGMVLAIQDSISLEKAISDLTKAKKILDESRPTAVNLMWATSRMLNKAKDLVEQGNAKSVKELKELLEIEANKIFEEEYEAELKIGLYGIEKVNDGDTILTQCNAGGLATGTGLGTALAPAKLANALGIKVSVIAPETRPWLQGSRLTVYELMEENIPVTLIADTAVGLVMFKKMVNSVMVGADRILSDGHVFNKIGTFKEAVIAHELGIPFYALAPSSTFDMISTVDQVKIEERSPDEVRSIKGVYISPKEVKVYNPVFDVTPPKYVSAIITEYGIIYPPFDKNMRRMLGK</sequence>
<dbReference type="EC" id="5.3.1.23" evidence="1"/>
<dbReference type="EMBL" id="CP000077">
    <property type="protein sequence ID" value="AAY79937.1"/>
    <property type="molecule type" value="Genomic_DNA"/>
</dbReference>
<dbReference type="RefSeq" id="WP_011277439.1">
    <property type="nucleotide sequence ID" value="NC_007181.1"/>
</dbReference>
<dbReference type="SMR" id="Q4JB92"/>
<dbReference type="STRING" id="330779.Saci_0539"/>
<dbReference type="GeneID" id="14551065"/>
<dbReference type="KEGG" id="sai:Saci_0539"/>
<dbReference type="PATRIC" id="fig|330779.12.peg.526"/>
<dbReference type="eggNOG" id="arCOG01123">
    <property type="taxonomic scope" value="Archaea"/>
</dbReference>
<dbReference type="HOGENOM" id="CLU_016218_1_2_2"/>
<dbReference type="Proteomes" id="UP000001018">
    <property type="component" value="Chromosome"/>
</dbReference>
<dbReference type="GO" id="GO:0046523">
    <property type="term" value="F:S-methyl-5-thioribose-1-phosphate isomerase activity"/>
    <property type="evidence" value="ECO:0007669"/>
    <property type="project" value="UniProtKB-UniRule"/>
</dbReference>
<dbReference type="GO" id="GO:0019509">
    <property type="term" value="P:L-methionine salvage from methylthioadenosine"/>
    <property type="evidence" value="ECO:0007669"/>
    <property type="project" value="UniProtKB-UniRule"/>
</dbReference>
<dbReference type="FunFam" id="1.20.120.420:FF:000003">
    <property type="entry name" value="Methylthioribose-1-phosphate isomerase"/>
    <property type="match status" value="1"/>
</dbReference>
<dbReference type="FunFam" id="3.40.50.10470:FF:000006">
    <property type="entry name" value="Methylthioribose-1-phosphate isomerase"/>
    <property type="match status" value="1"/>
</dbReference>
<dbReference type="Gene3D" id="1.20.120.420">
    <property type="entry name" value="translation initiation factor eif-2b, domain 1"/>
    <property type="match status" value="1"/>
</dbReference>
<dbReference type="Gene3D" id="3.40.50.10470">
    <property type="entry name" value="Translation initiation factor eif-2b, domain 2"/>
    <property type="match status" value="1"/>
</dbReference>
<dbReference type="HAMAP" id="MF_01678">
    <property type="entry name" value="Salvage_MtnA"/>
    <property type="match status" value="1"/>
</dbReference>
<dbReference type="InterPro" id="IPR000649">
    <property type="entry name" value="IF-2B-related"/>
</dbReference>
<dbReference type="InterPro" id="IPR005251">
    <property type="entry name" value="IF-M1Pi"/>
</dbReference>
<dbReference type="InterPro" id="IPR042529">
    <property type="entry name" value="IF_2B-like_C"/>
</dbReference>
<dbReference type="InterPro" id="IPR011559">
    <property type="entry name" value="Initiation_fac_2B_a/b/d"/>
</dbReference>
<dbReference type="InterPro" id="IPR027363">
    <property type="entry name" value="M1Pi_N"/>
</dbReference>
<dbReference type="InterPro" id="IPR037171">
    <property type="entry name" value="NagB/RpiA_transferase-like"/>
</dbReference>
<dbReference type="NCBIfam" id="TIGR00524">
    <property type="entry name" value="eIF-2B_rel"/>
    <property type="match status" value="1"/>
</dbReference>
<dbReference type="NCBIfam" id="NF004326">
    <property type="entry name" value="PRK05720.1"/>
    <property type="match status" value="1"/>
</dbReference>
<dbReference type="NCBIfam" id="NF004436">
    <property type="entry name" value="PRK05772.1"/>
    <property type="match status" value="1"/>
</dbReference>
<dbReference type="NCBIfam" id="TIGR00512">
    <property type="entry name" value="salvage_mtnA"/>
    <property type="match status" value="1"/>
</dbReference>
<dbReference type="PANTHER" id="PTHR43475">
    <property type="entry name" value="METHYLTHIORIBOSE-1-PHOSPHATE ISOMERASE"/>
    <property type="match status" value="1"/>
</dbReference>
<dbReference type="PANTHER" id="PTHR43475:SF1">
    <property type="entry name" value="METHYLTHIORIBOSE-1-PHOSPHATE ISOMERASE"/>
    <property type="match status" value="1"/>
</dbReference>
<dbReference type="Pfam" id="PF01008">
    <property type="entry name" value="IF-2B"/>
    <property type="match status" value="1"/>
</dbReference>
<dbReference type="SUPFAM" id="SSF100950">
    <property type="entry name" value="NagB/RpiA/CoA transferase-like"/>
    <property type="match status" value="1"/>
</dbReference>
<feature type="chain" id="PRO_0000401969" description="Putative methylthioribose-1-phosphate isomerase">
    <location>
        <begin position="1"/>
        <end position="367"/>
    </location>
</feature>
<feature type="active site" description="Proton donor" evidence="1">
    <location>
        <position position="259"/>
    </location>
</feature>
<feature type="binding site" evidence="1">
    <location>
        <begin position="65"/>
        <end position="67"/>
    </location>
    <ligand>
        <name>substrate</name>
    </ligand>
</feature>
<feature type="binding site" evidence="1">
    <location>
        <position position="106"/>
    </location>
    <ligand>
        <name>substrate</name>
    </ligand>
</feature>
<feature type="binding site" evidence="1">
    <location>
        <position position="218"/>
    </location>
    <ligand>
        <name>substrate</name>
    </ligand>
</feature>
<feature type="binding site" evidence="1">
    <location>
        <begin position="269"/>
        <end position="270"/>
    </location>
    <ligand>
        <name>substrate</name>
    </ligand>
</feature>
<feature type="site" description="Transition state stabilizer" evidence="1">
    <location>
        <position position="178"/>
    </location>
</feature>
<reference key="1">
    <citation type="journal article" date="2005" name="J. Bacteriol.">
        <title>The genome of Sulfolobus acidocaldarius, a model organism of the Crenarchaeota.</title>
        <authorList>
            <person name="Chen L."/>
            <person name="Bruegger K."/>
            <person name="Skovgaard M."/>
            <person name="Redder P."/>
            <person name="She Q."/>
            <person name="Torarinsson E."/>
            <person name="Greve B."/>
            <person name="Awayez M."/>
            <person name="Zibat A."/>
            <person name="Klenk H.-P."/>
            <person name="Garrett R.A."/>
        </authorList>
    </citation>
    <scope>NUCLEOTIDE SEQUENCE [LARGE SCALE GENOMIC DNA]</scope>
    <source>
        <strain>ATCC 33909 / DSM 639 / JCM 8929 / NBRC 15157 / NCIMB 11770</strain>
    </source>
</reference>
<name>MTNA_SULAC</name>
<keyword id="KW-0028">Amino-acid biosynthesis</keyword>
<keyword id="KW-0413">Isomerase</keyword>
<keyword id="KW-0486">Methionine biosynthesis</keyword>
<keyword id="KW-1185">Reference proteome</keyword>
<comment type="function">
    <text evidence="1">Catalyzes the interconversion of methylthioribose-1-phosphate (MTR-1-P) into methylthioribulose-1-phosphate (MTRu-1-P).</text>
</comment>
<comment type="catalytic activity">
    <reaction evidence="1">
        <text>5-(methylsulfanyl)-alpha-D-ribose 1-phosphate = 5-(methylsulfanyl)-D-ribulose 1-phosphate</text>
        <dbReference type="Rhea" id="RHEA:19989"/>
        <dbReference type="ChEBI" id="CHEBI:58533"/>
        <dbReference type="ChEBI" id="CHEBI:58548"/>
        <dbReference type="EC" id="5.3.1.23"/>
    </reaction>
</comment>
<comment type="similarity">
    <text evidence="2">Belongs to the eIF-2B alpha/beta/delta subunits family. MtnA subfamily.</text>
</comment>
<organism>
    <name type="scientific">Sulfolobus acidocaldarius (strain ATCC 33909 / DSM 639 / JCM 8929 / NBRC 15157 / NCIMB 11770)</name>
    <dbReference type="NCBI Taxonomy" id="330779"/>
    <lineage>
        <taxon>Archaea</taxon>
        <taxon>Thermoproteota</taxon>
        <taxon>Thermoprotei</taxon>
        <taxon>Sulfolobales</taxon>
        <taxon>Sulfolobaceae</taxon>
        <taxon>Sulfolobus</taxon>
    </lineage>
</organism>
<evidence type="ECO:0000255" key="1">
    <source>
        <dbReference type="HAMAP-Rule" id="MF_01678"/>
    </source>
</evidence>
<evidence type="ECO:0000305" key="2"/>
<accession>Q4JB92</accession>
<proteinExistence type="inferred from homology"/>
<protein>
    <recommendedName>
        <fullName evidence="1">Putative methylthioribose-1-phosphate isomerase</fullName>
        <shortName evidence="1">M1Pi</shortName>
        <shortName evidence="1">MTR-1-P isomerase</shortName>
        <ecNumber evidence="1">5.3.1.23</ecNumber>
    </recommendedName>
    <alternativeName>
        <fullName evidence="1">MTNA-like protein</fullName>
        <shortName evidence="1">aMTNA</shortName>
    </alternativeName>
    <alternativeName>
        <fullName evidence="1">S-methyl-5-thioribose-1-phosphate isomerase</fullName>
    </alternativeName>
</protein>